<dbReference type="EMBL" id="FJ973561">
    <property type="protein sequence ID" value="ACR15780.1"/>
    <property type="molecule type" value="Genomic_DNA"/>
</dbReference>
<dbReference type="RefSeq" id="YP_002916061.1">
    <property type="nucleotide sequence ID" value="NC_012729.2"/>
</dbReference>
<dbReference type="DNASU" id="7922601"/>
<dbReference type="GeneID" id="7922601"/>
<dbReference type="KEGG" id="vg:7922601"/>
<dbReference type="OrthoDB" id="10942at10239"/>
<dbReference type="Proteomes" id="UP000106086">
    <property type="component" value="Genome"/>
</dbReference>
<dbReference type="GO" id="GO:0042025">
    <property type="term" value="C:host cell nucleus"/>
    <property type="evidence" value="ECO:0007669"/>
    <property type="project" value="UniProtKB-SubCell"/>
</dbReference>
<dbReference type="InterPro" id="IPR021075">
    <property type="entry name" value="Bocavirus_NP1"/>
</dbReference>
<dbReference type="Pfam" id="PF11733">
    <property type="entry name" value="NP1-WLL"/>
    <property type="match status" value="1"/>
</dbReference>
<proteinExistence type="inferred from homology"/>
<sequence>MSSESTKNRHRSSKRTPSPLQKERKRNWENRKSRSRSPIRRHGEKNLEYAHHNNQDNRQSSYTASKTSDQAMKTKEKTSGGTRTNPYTVFSQHRANHSNAPGWCGFYWHSTRLARNGTNNIFNEMKQKFQELQIDGKISWDTTRELLFTQKKTLDQGYRNMLYHFRHSPDCPRCDYWDDVYRKHLANVSSQESEEVTDEEMLSAVESMETNASN</sequence>
<gene>
    <name type="primary">NP1</name>
    <name type="synonym">NP-1</name>
</gene>
<feature type="chain" id="PRO_0000445640" description="Non-structural protein NP-1">
    <location>
        <begin position="1"/>
        <end position="214"/>
    </location>
</feature>
<feature type="region of interest" description="Disordered" evidence="2">
    <location>
        <begin position="1"/>
        <end position="85"/>
    </location>
</feature>
<feature type="region of interest" description="Disordered" evidence="2">
    <location>
        <begin position="192"/>
        <end position="214"/>
    </location>
</feature>
<feature type="compositionally biased region" description="Basic residues" evidence="2">
    <location>
        <begin position="33"/>
        <end position="43"/>
    </location>
</feature>
<feature type="compositionally biased region" description="Basic and acidic residues" evidence="2">
    <location>
        <begin position="44"/>
        <end position="55"/>
    </location>
</feature>
<feature type="compositionally biased region" description="Polar residues" evidence="2">
    <location>
        <begin position="56"/>
        <end position="71"/>
    </location>
</feature>
<feature type="compositionally biased region" description="Acidic residues" evidence="2">
    <location>
        <begin position="192"/>
        <end position="201"/>
    </location>
</feature>
<organism>
    <name type="scientific">Human bocavirus 4</name>
    <name type="common">HBoV4</name>
    <name type="synonym">Human bocavirus type 4</name>
    <dbReference type="NCBI Taxonomy" id="1511883"/>
    <lineage>
        <taxon>Viruses</taxon>
        <taxon>Monodnaviria</taxon>
        <taxon>Shotokuvirae</taxon>
        <taxon>Cossaviricota</taxon>
        <taxon>Quintoviricetes</taxon>
        <taxon>Piccovirales</taxon>
        <taxon>Parvoviridae</taxon>
        <taxon>Parvovirinae</taxon>
        <taxon>Bocaparvovirus</taxon>
        <taxon>Bocaparvovirus primate2</taxon>
    </lineage>
</organism>
<name>NP1_HBOC4</name>
<protein>
    <recommendedName>
        <fullName>Non-structural protein NP-1</fullName>
        <shortName>NP1</shortName>
    </recommendedName>
</protein>
<comment type="function">
    <text evidence="1">Required for the expression of the capsid proteins. Performs the splicing and internal polyadenylation of the viral capsid-encoding mRNA precursor, which allows its maturation and expression. Transactivates the viral promoter.</text>
</comment>
<comment type="subcellular location">
    <subcellularLocation>
        <location evidence="1">Host nucleus</location>
    </subcellularLocation>
</comment>
<comment type="similarity">
    <text evidence="3">Belongs to the Bocaparvovirus Non-structural protein NP-1 family.</text>
</comment>
<accession>C5IY45</accession>
<evidence type="ECO:0000250" key="1">
    <source>
        <dbReference type="UniProtKB" id="Q3YPH5"/>
    </source>
</evidence>
<evidence type="ECO:0000256" key="2">
    <source>
        <dbReference type="SAM" id="MobiDB-lite"/>
    </source>
</evidence>
<evidence type="ECO:0000305" key="3"/>
<keyword id="KW-0010">Activator</keyword>
<keyword id="KW-1048">Host nucleus</keyword>
<keyword id="KW-0804">Transcription</keyword>
<keyword id="KW-0805">Transcription regulation</keyword>
<reference key="1">
    <citation type="journal article" date="2010" name="J. Infect. Dis.">
        <title>Human bocaviruses are highly diverse, dispersed, recombination prone, and prevalent in enteric infections.</title>
        <authorList>
            <person name="Kapoor A."/>
            <person name="Simmonds P."/>
            <person name="Slikas E."/>
            <person name="Li L."/>
            <person name="Bodhidatta L."/>
            <person name="Sethabutr O."/>
            <person name="Triki H."/>
            <person name="Bahri O."/>
            <person name="Oderinde B.S."/>
            <person name="Baba M.M."/>
            <person name="Bukbuk D.N."/>
            <person name="Besser J."/>
            <person name="Bartkus J."/>
            <person name="Delwart E."/>
        </authorList>
    </citation>
    <scope>NUCLEOTIDE SEQUENCE [LARGE SCALE GENOMIC DNA]</scope>
    <source>
        <strain>HBoV4-NI-385</strain>
    </source>
</reference>
<organismHost>
    <name type="scientific">Homo sapiens</name>
    <name type="common">Human</name>
    <dbReference type="NCBI Taxonomy" id="9606"/>
</organismHost>